<proteinExistence type="evidence at protein level"/>
<comment type="function">
    <text evidence="3 4">Involved in storage lipid mobilization during the growth of higher plant seedling.</text>
</comment>
<comment type="catalytic activity">
    <reaction evidence="3 4">
        <text>D-threo-isocitrate = glyoxylate + succinate</text>
        <dbReference type="Rhea" id="RHEA:13245"/>
        <dbReference type="ChEBI" id="CHEBI:15562"/>
        <dbReference type="ChEBI" id="CHEBI:30031"/>
        <dbReference type="ChEBI" id="CHEBI:36655"/>
        <dbReference type="EC" id="4.1.3.1"/>
    </reaction>
</comment>
<comment type="cofactor">
    <cofactor evidence="2">
        <name>Mg(2+)</name>
        <dbReference type="ChEBI" id="CHEBI:18420"/>
    </cofactor>
</comment>
<comment type="pathway">
    <text evidence="7">Carbohydrate metabolism; glyoxylate cycle; (S)-malate from isocitrate: step 1/2.</text>
</comment>
<comment type="subunit">
    <text evidence="1">Homotetramer.</text>
</comment>
<comment type="subcellular location">
    <subcellularLocation>
        <location evidence="5">Glyoxysome</location>
    </subcellularLocation>
</comment>
<comment type="developmental stage">
    <text evidence="3 5">Expressed from 1 to 3 days after seed imbibition (PubMed:10805817). Expressed from 1 to 5 days after seed imbibition (at protein level).</text>
</comment>
<comment type="disruption phenotype">
    <text evidence="3 4">No visible phenotype under normal growth conditions, but mutant seedlings fail to establish into plantlets with true leaves under low light or short day conditions.</text>
</comment>
<comment type="similarity">
    <text evidence="7">Belongs to the isocitrate lyase/PEP mutase superfamily. Isocitrate lyase family.</text>
</comment>
<organism>
    <name type="scientific">Arabidopsis thaliana</name>
    <name type="common">Mouse-ear cress</name>
    <dbReference type="NCBI Taxonomy" id="3702"/>
    <lineage>
        <taxon>Eukaryota</taxon>
        <taxon>Viridiplantae</taxon>
        <taxon>Streptophyta</taxon>
        <taxon>Embryophyta</taxon>
        <taxon>Tracheophyta</taxon>
        <taxon>Spermatophyta</taxon>
        <taxon>Magnoliopsida</taxon>
        <taxon>eudicotyledons</taxon>
        <taxon>Gunneridae</taxon>
        <taxon>Pentapetalae</taxon>
        <taxon>rosids</taxon>
        <taxon>malvids</taxon>
        <taxon>Brassicales</taxon>
        <taxon>Brassicaceae</taxon>
        <taxon>Camelineae</taxon>
        <taxon>Arabidopsis</taxon>
    </lineage>
</organism>
<reference key="1">
    <citation type="journal article" date="2000" name="DNA Res.">
        <title>Structural analysis of Arabidopsis thaliana chromosome 3. I. Sequence features of the regions of 4,504,864 bp covered by sixty P1 and TAC clones.</title>
        <authorList>
            <person name="Sato S."/>
            <person name="Nakamura Y."/>
            <person name="Kaneko T."/>
            <person name="Katoh T."/>
            <person name="Asamizu E."/>
            <person name="Tabata S."/>
        </authorList>
    </citation>
    <scope>NUCLEOTIDE SEQUENCE [LARGE SCALE GENOMIC DNA]</scope>
    <source>
        <strain>cv. Columbia</strain>
    </source>
</reference>
<reference key="2">
    <citation type="journal article" date="2017" name="Plant J.">
        <title>Araport11: a complete reannotation of the Arabidopsis thaliana reference genome.</title>
        <authorList>
            <person name="Cheng C.Y."/>
            <person name="Krishnakumar V."/>
            <person name="Chan A.P."/>
            <person name="Thibaud-Nissen F."/>
            <person name="Schobel S."/>
            <person name="Town C.D."/>
        </authorList>
    </citation>
    <scope>GENOME REANNOTATION</scope>
    <source>
        <strain>cv. Columbia</strain>
    </source>
</reference>
<reference key="3">
    <citation type="journal article" date="2003" name="Science">
        <title>Empirical analysis of transcriptional activity in the Arabidopsis genome.</title>
        <authorList>
            <person name="Yamada K."/>
            <person name="Lim J."/>
            <person name="Dale J.M."/>
            <person name="Chen H."/>
            <person name="Shinn P."/>
            <person name="Palm C.J."/>
            <person name="Southwick A.M."/>
            <person name="Wu H.C."/>
            <person name="Kim C.J."/>
            <person name="Nguyen M."/>
            <person name="Pham P.K."/>
            <person name="Cheuk R.F."/>
            <person name="Karlin-Newmann G."/>
            <person name="Liu S.X."/>
            <person name="Lam B."/>
            <person name="Sakano H."/>
            <person name="Wu T."/>
            <person name="Yu G."/>
            <person name="Miranda M."/>
            <person name="Quach H.L."/>
            <person name="Tripp M."/>
            <person name="Chang C.H."/>
            <person name="Lee J.M."/>
            <person name="Toriumi M.J."/>
            <person name="Chan M.M."/>
            <person name="Tang C.C."/>
            <person name="Onodera C.S."/>
            <person name="Deng J.M."/>
            <person name="Akiyama K."/>
            <person name="Ansari Y."/>
            <person name="Arakawa T."/>
            <person name="Banh J."/>
            <person name="Banno F."/>
            <person name="Bowser L."/>
            <person name="Brooks S.Y."/>
            <person name="Carninci P."/>
            <person name="Chao Q."/>
            <person name="Choy N."/>
            <person name="Enju A."/>
            <person name="Goldsmith A.D."/>
            <person name="Gurjal M."/>
            <person name="Hansen N.F."/>
            <person name="Hayashizaki Y."/>
            <person name="Johnson-Hopson C."/>
            <person name="Hsuan V.W."/>
            <person name="Iida K."/>
            <person name="Karnes M."/>
            <person name="Khan S."/>
            <person name="Koesema E."/>
            <person name="Ishida J."/>
            <person name="Jiang P.X."/>
            <person name="Jones T."/>
            <person name="Kawai J."/>
            <person name="Kamiya A."/>
            <person name="Meyers C."/>
            <person name="Nakajima M."/>
            <person name="Narusaka M."/>
            <person name="Seki M."/>
            <person name="Sakurai T."/>
            <person name="Satou M."/>
            <person name="Tamse R."/>
            <person name="Vaysberg M."/>
            <person name="Wallender E.K."/>
            <person name="Wong C."/>
            <person name="Yamamura Y."/>
            <person name="Yuan S."/>
            <person name="Shinozaki K."/>
            <person name="Davis R.W."/>
            <person name="Theologis A."/>
            <person name="Ecker J.R."/>
        </authorList>
    </citation>
    <scope>NUCLEOTIDE SEQUENCE [LARGE SCALE MRNA]</scope>
    <source>
        <strain>cv. Columbia</strain>
    </source>
</reference>
<reference key="4">
    <citation type="submission" date="1992-02" db="EMBL/GenBank/DDBJ databases">
        <title>Isocitrate lyase gene from Arabidopsis thaliana.</title>
        <authorList>
            <person name="Bernhard W.R."/>
            <person name="Matile P."/>
        </authorList>
    </citation>
    <scope>NUCLEOTIDE SEQUENCE OF 1-450</scope>
    <source>
        <strain>cv. Columbia</strain>
    </source>
</reference>
<reference key="5">
    <citation type="journal article" date="1993" name="Plant J.">
        <title>An inventory of 1152 expressed sequence tags obtained by partial sequencing of cDNAs from Arabidopsis thaliana.</title>
        <authorList>
            <person name="Hoefte H."/>
            <person name="Desprez T."/>
            <person name="Amselem J."/>
            <person name="Chiapello H."/>
            <person name="Rouze P."/>
            <person name="Caboche M."/>
            <person name="Moisan A."/>
            <person name="Jourjon M.-F."/>
            <person name="Charpenteau J.-L."/>
            <person name="Berthomieu P."/>
            <person name="Guerrier D."/>
            <person name="Giraudat J."/>
            <person name="Quigley F."/>
            <person name="Thomas F."/>
            <person name="Yu D.-Y."/>
            <person name="Mache R."/>
            <person name="Raynal M."/>
            <person name="Cooke R."/>
            <person name="Grellet F."/>
            <person name="Delseny M."/>
            <person name="Parmentier Y."/>
            <person name="de Marcillac G."/>
            <person name="Gigot C."/>
            <person name="Fleck J."/>
            <person name="Philipps G."/>
            <person name="Axelos M."/>
            <person name="Bardet C."/>
            <person name="Tremousaygue D."/>
            <person name="Lescure B."/>
        </authorList>
    </citation>
    <scope>NUCLEOTIDE SEQUENCE [LARGE SCALE MRNA] OF 50-152</scope>
    <source>
        <strain>cv. Columbia</strain>
        <tissue>Seedling</tissue>
    </source>
</reference>
<reference key="6">
    <citation type="journal article" date="2000" name="Proc. Natl. Acad. Sci. U.S.A.">
        <title>Postgerminative growth and lipid catabolism in oilseeds lacking the glyoxylate cycle.</title>
        <authorList>
            <person name="Eastmond P.J."/>
            <person name="Germain V."/>
            <person name="Lange P.R."/>
            <person name="Bryce J.H."/>
            <person name="Smith S.M."/>
            <person name="Graham I.A."/>
        </authorList>
    </citation>
    <scope>FUNCTION</scope>
    <scope>CATALYTIC ACTIVITY</scope>
    <scope>DEVELOPMENTAL STAGE</scope>
    <scope>DISRUPTION PHENOTYPE</scope>
</reference>
<reference key="7">
    <citation type="journal article" date="2004" name="J. Biol. Chem.">
        <title>Lipid utilization, gluconeogenesis, and seedling growth in Arabidopsis mutants lacking the glyoxylate cycle enzyme malate synthase.</title>
        <authorList>
            <person name="Cornah J.E."/>
            <person name="Germain V."/>
            <person name="Ward J.L."/>
            <person name="Beale M.H."/>
            <person name="Smith S.M."/>
        </authorList>
    </citation>
    <scope>FUNCTION</scope>
    <scope>CATALYTIC ACTIVITY</scope>
    <scope>DISRUPTION PHENOTYPE</scope>
</reference>
<reference key="8">
    <citation type="journal article" date="2009" name="J. Proteomics">
        <title>Phosphoproteomic analysis of nuclei-enriched fractions from Arabidopsis thaliana.</title>
        <authorList>
            <person name="Jones A.M.E."/>
            <person name="MacLean D."/>
            <person name="Studholme D.J."/>
            <person name="Serna-Sanz A."/>
            <person name="Andreasson E."/>
            <person name="Rathjen J.P."/>
            <person name="Peck S.C."/>
        </authorList>
    </citation>
    <scope>IDENTIFICATION BY MASS SPECTROMETRY [LARGE SCALE ANALYSIS]</scope>
    <source>
        <strain>cv. Columbia</strain>
    </source>
</reference>
<reference key="9">
    <citation type="journal article" date="2009" name="Proc. Natl. Acad. Sci. U.S.A.">
        <title>Peroxisome-associated matrix protein degradation in Arabidopsis.</title>
        <authorList>
            <person name="Lingard M.J."/>
            <person name="Monroe-Augustus M."/>
            <person name="Bartel B."/>
        </authorList>
    </citation>
    <scope>SUBCELLULAR LOCATION</scope>
    <scope>DEVELOPMENTAL STAGE</scope>
</reference>
<sequence>MAASFSVPSMIMEEEGRFEAEVAEVQTWWSSERFKLTRRPYTARDVVALRGHLKQGYASNEMAKKLWRTLKSHQANGTASRTFGALDPVQVTMMAKHLDTIYVSGWQCSSTHTSTNEPGPDLADYPYDTVPNKVEHLFFAQQYHDRKQREARMSMSREERTKTPFVDYLKPIIADGDTGFGGTTATVKLCKLFVERGAAGVHIEDQSSVTKKCGHMAGKVLVAVSEHINRLVAARLQFDVMGTETVLVARTDAVAATLIQSNIDARDHQFILGATNPSLRGKSLSSLLAEGMTVGKNGPALQSIEDQWLGSAGLMTFSEAVVQAIKRMNLNENEKNQRLSEWLTHARYENCLSNEQGRVLAAKLGVTDLFWDWDLPRTREGFYRFQGSVAAAVVRGWAFAQIADIIWMETASPDLNECTQFAEGIKSKTPEVMLAYNLSPSFNWDASGMTDQQMVEFIPRIARLGYCWQFITLAGFHADALVVDTFAKDYARRGMLAYVERIQREERTHGVDTLAHQKWSGANYYDRYLKTVQGGISSTAAMGKGVTEEQFKESWTRPGADGMGEGTSLVVAKSRM</sequence>
<gene>
    <name evidence="6" type="primary">ICL</name>
    <name type="ordered locus">At3g21720</name>
    <name evidence="8" type="ORF">MSD21.3</name>
</gene>
<protein>
    <recommendedName>
        <fullName evidence="6">Isocitrate lyase</fullName>
        <shortName evidence="6">ICL</shortName>
        <ecNumber evidence="3 4">4.1.3.1</ecNumber>
    </recommendedName>
    <alternativeName>
        <fullName evidence="7">Isocitrase</fullName>
    </alternativeName>
    <alternativeName>
        <fullName evidence="7">Isocitratsysase</fullName>
    </alternativeName>
</protein>
<accession>P28297</accession>
<accession>Q41948</accession>
<accession>Q9LSZ2</accession>
<evidence type="ECO:0000250" key="1">
    <source>
        <dbReference type="UniProtKB" id="P28240"/>
    </source>
</evidence>
<evidence type="ECO:0000250" key="2">
    <source>
        <dbReference type="UniProtKB" id="P9WKK7"/>
    </source>
</evidence>
<evidence type="ECO:0000269" key="3">
    <source>
    </source>
</evidence>
<evidence type="ECO:0000269" key="4">
    <source>
    </source>
</evidence>
<evidence type="ECO:0000269" key="5">
    <source>
    </source>
</evidence>
<evidence type="ECO:0000303" key="6">
    <source>
    </source>
</evidence>
<evidence type="ECO:0000305" key="7"/>
<evidence type="ECO:0000312" key="8">
    <source>
        <dbReference type="EMBL" id="BAB02834.1"/>
    </source>
</evidence>
<name>ACEA_ARATH</name>
<dbReference type="EC" id="4.1.3.1" evidence="3 4"/>
<dbReference type="EMBL" id="AB025634">
    <property type="protein sequence ID" value="BAB02834.1"/>
    <property type="molecule type" value="Genomic_DNA"/>
</dbReference>
<dbReference type="EMBL" id="CP002686">
    <property type="protein sequence ID" value="AEE76544.1"/>
    <property type="molecule type" value="Genomic_DNA"/>
</dbReference>
<dbReference type="EMBL" id="AY140000">
    <property type="protein sequence ID" value="AAM98142.1"/>
    <property type="molecule type" value="mRNA"/>
</dbReference>
<dbReference type="EMBL" id="BT010397">
    <property type="protein sequence ID" value="AAQ56840.1"/>
    <property type="molecule type" value="mRNA"/>
</dbReference>
<dbReference type="EMBL" id="M83534">
    <property type="protein sequence ID" value="AAA32823.2"/>
    <property type="molecule type" value="Genomic_DNA"/>
</dbReference>
<dbReference type="EMBL" id="Z18772">
    <property type="protein sequence ID" value="CAA79248.1"/>
    <property type="molecule type" value="mRNA"/>
</dbReference>
<dbReference type="RefSeq" id="NP_188809.2">
    <property type="nucleotide sequence ID" value="NM_113067.4"/>
</dbReference>
<dbReference type="SMR" id="P28297"/>
<dbReference type="BioGRID" id="7058">
    <property type="interactions" value="5"/>
</dbReference>
<dbReference type="FunCoup" id="P28297">
    <property type="interactions" value="323"/>
</dbReference>
<dbReference type="IntAct" id="P28297">
    <property type="interactions" value="2"/>
</dbReference>
<dbReference type="STRING" id="3702.P28297"/>
<dbReference type="iPTMnet" id="P28297"/>
<dbReference type="PaxDb" id="3702-AT3G21720.1"/>
<dbReference type="ProteomicsDB" id="244641"/>
<dbReference type="EnsemblPlants" id="AT3G21720.1">
    <property type="protein sequence ID" value="AT3G21720.1"/>
    <property type="gene ID" value="AT3G21720"/>
</dbReference>
<dbReference type="GeneID" id="821726"/>
<dbReference type="Gramene" id="AT3G21720.1">
    <property type="protein sequence ID" value="AT3G21720.1"/>
    <property type="gene ID" value="AT3G21720"/>
</dbReference>
<dbReference type="KEGG" id="ath:AT3G21720"/>
<dbReference type="Araport" id="AT3G21720"/>
<dbReference type="TAIR" id="AT3G21720">
    <property type="gene designation" value="ICL"/>
</dbReference>
<dbReference type="eggNOG" id="KOG1260">
    <property type="taxonomic scope" value="Eukaryota"/>
</dbReference>
<dbReference type="HOGENOM" id="CLU_019214_2_2_1"/>
<dbReference type="InParanoid" id="P28297"/>
<dbReference type="OMA" id="YVSGWQV"/>
<dbReference type="PhylomeDB" id="P28297"/>
<dbReference type="BioCyc" id="ARA:AT3G21720-MONOMER"/>
<dbReference type="BioCyc" id="MetaCyc:MONOMER-1601"/>
<dbReference type="UniPathway" id="UPA00703">
    <property type="reaction ID" value="UER00719"/>
</dbReference>
<dbReference type="PRO" id="PR:P28297"/>
<dbReference type="Proteomes" id="UP000006548">
    <property type="component" value="Chromosome 3"/>
</dbReference>
<dbReference type="ExpressionAtlas" id="P28297">
    <property type="expression patterns" value="baseline and differential"/>
</dbReference>
<dbReference type="GO" id="GO:0009514">
    <property type="term" value="C:glyoxysome"/>
    <property type="evidence" value="ECO:0000314"/>
    <property type="project" value="UniProtKB"/>
</dbReference>
<dbReference type="GO" id="GO:0004451">
    <property type="term" value="F:isocitrate lyase activity"/>
    <property type="evidence" value="ECO:0000304"/>
    <property type="project" value="UniProtKB"/>
</dbReference>
<dbReference type="GO" id="GO:0046872">
    <property type="term" value="F:metal ion binding"/>
    <property type="evidence" value="ECO:0007669"/>
    <property type="project" value="UniProtKB-KW"/>
</dbReference>
<dbReference type="GO" id="GO:0006097">
    <property type="term" value="P:glyoxylate cycle"/>
    <property type="evidence" value="ECO:0000304"/>
    <property type="project" value="UniProtKB"/>
</dbReference>
<dbReference type="GO" id="GO:0006099">
    <property type="term" value="P:tricarboxylic acid cycle"/>
    <property type="evidence" value="ECO:0007669"/>
    <property type="project" value="UniProtKB-KW"/>
</dbReference>
<dbReference type="CDD" id="cd00377">
    <property type="entry name" value="ICL_PEPM"/>
    <property type="match status" value="1"/>
</dbReference>
<dbReference type="FunFam" id="1.10.10.850:FF:000001">
    <property type="entry name" value="Isocitrate lyase"/>
    <property type="match status" value="1"/>
</dbReference>
<dbReference type="Gene3D" id="1.10.10.850">
    <property type="match status" value="1"/>
</dbReference>
<dbReference type="Gene3D" id="3.20.20.60">
    <property type="entry name" value="Phosphoenolpyruvate-binding domains"/>
    <property type="match status" value="1"/>
</dbReference>
<dbReference type="InterPro" id="IPR039556">
    <property type="entry name" value="ICL/PEPM"/>
</dbReference>
<dbReference type="InterPro" id="IPR006254">
    <property type="entry name" value="Isocitrate_lyase"/>
</dbReference>
<dbReference type="InterPro" id="IPR018523">
    <property type="entry name" value="Isocitrate_lyase_ph_CS"/>
</dbReference>
<dbReference type="InterPro" id="IPR015813">
    <property type="entry name" value="Pyrv/PenolPyrv_kinase-like_dom"/>
</dbReference>
<dbReference type="InterPro" id="IPR040442">
    <property type="entry name" value="Pyrv_kinase-like_dom_sf"/>
</dbReference>
<dbReference type="NCBIfam" id="TIGR01346">
    <property type="entry name" value="isocit_lyase"/>
    <property type="match status" value="1"/>
</dbReference>
<dbReference type="PANTHER" id="PTHR21631:SF3">
    <property type="entry name" value="BIFUNCTIONAL GLYOXYLATE CYCLE PROTEIN"/>
    <property type="match status" value="1"/>
</dbReference>
<dbReference type="PANTHER" id="PTHR21631">
    <property type="entry name" value="ISOCITRATE LYASE/MALATE SYNTHASE"/>
    <property type="match status" value="1"/>
</dbReference>
<dbReference type="Pfam" id="PF00463">
    <property type="entry name" value="ICL"/>
    <property type="match status" value="1"/>
</dbReference>
<dbReference type="PIRSF" id="PIRSF001362">
    <property type="entry name" value="Isocit_lyase"/>
    <property type="match status" value="1"/>
</dbReference>
<dbReference type="SUPFAM" id="SSF51621">
    <property type="entry name" value="Phosphoenolpyruvate/pyruvate domain"/>
    <property type="match status" value="1"/>
</dbReference>
<dbReference type="PROSITE" id="PS00161">
    <property type="entry name" value="ISOCITRATE_LYASE"/>
    <property type="match status" value="1"/>
</dbReference>
<keyword id="KW-0329">Glyoxylate bypass</keyword>
<keyword id="KW-0330">Glyoxysome</keyword>
<keyword id="KW-0456">Lyase</keyword>
<keyword id="KW-0460">Magnesium</keyword>
<keyword id="KW-0479">Metal-binding</keyword>
<keyword id="KW-0576">Peroxisome</keyword>
<keyword id="KW-1185">Reference proteome</keyword>
<keyword id="KW-0816">Tricarboxylic acid cycle</keyword>
<feature type="chain" id="PRO_0000068801" description="Isocitrate lyase">
    <location>
        <begin position="1"/>
        <end position="576"/>
    </location>
</feature>
<feature type="short sequence motif" description="Microbody targeting signal" evidence="7">
    <location>
        <begin position="574"/>
        <end position="576"/>
    </location>
</feature>
<feature type="active site" description="Proton acceptor" evidence="7">
    <location>
        <position position="213"/>
    </location>
</feature>
<feature type="binding site" evidence="2">
    <location>
        <begin position="104"/>
        <end position="106"/>
    </location>
    <ligand>
        <name>substrate</name>
    </ligand>
</feature>
<feature type="binding site" evidence="2">
    <location>
        <position position="175"/>
    </location>
    <ligand>
        <name>Mg(2+)</name>
        <dbReference type="ChEBI" id="CHEBI:18420"/>
    </ligand>
</feature>
<feature type="binding site" evidence="2">
    <location>
        <begin position="214"/>
        <end position="215"/>
    </location>
    <ligand>
        <name>substrate</name>
    </ligand>
</feature>
<feature type="binding site" evidence="2">
    <location>
        <position position="250"/>
    </location>
    <ligand>
        <name>substrate</name>
    </ligand>
</feature>
<feature type="binding site" evidence="2">
    <location>
        <begin position="437"/>
        <end position="441"/>
    </location>
    <ligand>
        <name>substrate</name>
    </ligand>
</feature>
<feature type="binding site" evidence="2">
    <location>
        <position position="472"/>
    </location>
    <ligand>
        <name>substrate</name>
    </ligand>
</feature>
<feature type="sequence conflict" description="In Ref. 4; AAA32823." evidence="7" ref="4">
    <original>MAASFSVPSM</original>
    <variation>MIDKPNQ</variation>
    <location>
        <begin position="1"/>
        <end position="10"/>
    </location>
</feature>